<proteinExistence type="evidence at transcript level"/>
<organism>
    <name type="scientific">Arabidopsis thaliana</name>
    <name type="common">Mouse-ear cress</name>
    <dbReference type="NCBI Taxonomy" id="3702"/>
    <lineage>
        <taxon>Eukaryota</taxon>
        <taxon>Viridiplantae</taxon>
        <taxon>Streptophyta</taxon>
        <taxon>Embryophyta</taxon>
        <taxon>Tracheophyta</taxon>
        <taxon>Spermatophyta</taxon>
        <taxon>Magnoliopsida</taxon>
        <taxon>eudicotyledons</taxon>
        <taxon>Gunneridae</taxon>
        <taxon>Pentapetalae</taxon>
        <taxon>rosids</taxon>
        <taxon>malvids</taxon>
        <taxon>Brassicales</taxon>
        <taxon>Brassicaceae</taxon>
        <taxon>Camelineae</taxon>
        <taxon>Arabidopsis</taxon>
    </lineage>
</organism>
<evidence type="ECO:0000269" key="1">
    <source>
    </source>
</evidence>
<evidence type="ECO:0000303" key="2">
    <source>
    </source>
</evidence>
<evidence type="ECO:0000305" key="3"/>
<accession>Q9FLN4</accession>
<protein>
    <recommendedName>
        <fullName evidence="2">Large ribosomal subunit protein bL27c</fullName>
    </recommendedName>
    <alternativeName>
        <fullName>50S ribosomal protein L27, chloroplastic</fullName>
    </alternativeName>
    <alternativeName>
        <fullName>CL27</fullName>
    </alternativeName>
</protein>
<gene>
    <name type="primary">RPL27</name>
    <name type="ordered locus">At5g40950</name>
    <name type="ORF">MEE6.2</name>
</gene>
<reference key="1">
    <citation type="journal article" date="1998" name="DNA Res.">
        <title>Structural analysis of Arabidopsis thaliana chromosome 5. IV. Sequence features of the regions of 1,456,315 bp covered by nineteen physically assigned P1 and TAC clones.</title>
        <authorList>
            <person name="Sato S."/>
            <person name="Kaneko T."/>
            <person name="Kotani H."/>
            <person name="Nakamura Y."/>
            <person name="Asamizu E."/>
            <person name="Miyajima N."/>
            <person name="Tabata S."/>
        </authorList>
    </citation>
    <scope>NUCLEOTIDE SEQUENCE [LARGE SCALE GENOMIC DNA]</scope>
    <source>
        <strain>cv. Columbia</strain>
    </source>
</reference>
<reference key="2">
    <citation type="journal article" date="2017" name="Plant J.">
        <title>Araport11: a complete reannotation of the Arabidopsis thaliana reference genome.</title>
        <authorList>
            <person name="Cheng C.Y."/>
            <person name="Krishnakumar V."/>
            <person name="Chan A.P."/>
            <person name="Thibaud-Nissen F."/>
            <person name="Schobel S."/>
            <person name="Town C.D."/>
        </authorList>
    </citation>
    <scope>GENOME REANNOTATION</scope>
    <source>
        <strain>cv. Columbia</strain>
    </source>
</reference>
<reference key="3">
    <citation type="journal article" date="2003" name="Science">
        <title>Empirical analysis of transcriptional activity in the Arabidopsis genome.</title>
        <authorList>
            <person name="Yamada K."/>
            <person name="Lim J."/>
            <person name="Dale J.M."/>
            <person name="Chen H."/>
            <person name="Shinn P."/>
            <person name="Palm C.J."/>
            <person name="Southwick A.M."/>
            <person name="Wu H.C."/>
            <person name="Kim C.J."/>
            <person name="Nguyen M."/>
            <person name="Pham P.K."/>
            <person name="Cheuk R.F."/>
            <person name="Karlin-Newmann G."/>
            <person name="Liu S.X."/>
            <person name="Lam B."/>
            <person name="Sakano H."/>
            <person name="Wu T."/>
            <person name="Yu G."/>
            <person name="Miranda M."/>
            <person name="Quach H.L."/>
            <person name="Tripp M."/>
            <person name="Chang C.H."/>
            <person name="Lee J.M."/>
            <person name="Toriumi M.J."/>
            <person name="Chan M.M."/>
            <person name="Tang C.C."/>
            <person name="Onodera C.S."/>
            <person name="Deng J.M."/>
            <person name="Akiyama K."/>
            <person name="Ansari Y."/>
            <person name="Arakawa T."/>
            <person name="Banh J."/>
            <person name="Banno F."/>
            <person name="Bowser L."/>
            <person name="Brooks S.Y."/>
            <person name="Carninci P."/>
            <person name="Chao Q."/>
            <person name="Choy N."/>
            <person name="Enju A."/>
            <person name="Goldsmith A.D."/>
            <person name="Gurjal M."/>
            <person name="Hansen N.F."/>
            <person name="Hayashizaki Y."/>
            <person name="Johnson-Hopson C."/>
            <person name="Hsuan V.W."/>
            <person name="Iida K."/>
            <person name="Karnes M."/>
            <person name="Khan S."/>
            <person name="Koesema E."/>
            <person name="Ishida J."/>
            <person name="Jiang P.X."/>
            <person name="Jones T."/>
            <person name="Kawai J."/>
            <person name="Kamiya A."/>
            <person name="Meyers C."/>
            <person name="Nakajima M."/>
            <person name="Narusaka M."/>
            <person name="Seki M."/>
            <person name="Sakurai T."/>
            <person name="Satou M."/>
            <person name="Tamse R."/>
            <person name="Vaysberg M."/>
            <person name="Wallender E.K."/>
            <person name="Wong C."/>
            <person name="Yamamura Y."/>
            <person name="Yuan S."/>
            <person name="Shinozaki K."/>
            <person name="Davis R.W."/>
            <person name="Theologis A."/>
            <person name="Ecker J.R."/>
        </authorList>
    </citation>
    <scope>NUCLEOTIDE SEQUENCE [LARGE SCALE MRNA]</scope>
    <source>
        <strain>cv. Columbia</strain>
    </source>
</reference>
<reference key="4">
    <citation type="journal article" date="2012" name="Plant J.">
        <title>Versatile roles of Arabidopsis plastid ribosomal proteins in plant growth and development.</title>
        <authorList>
            <person name="Romani I."/>
            <person name="Tadini L."/>
            <person name="Rossi F."/>
            <person name="Masiero S."/>
            <person name="Pribil M."/>
            <person name="Jahns P."/>
            <person name="Kater M."/>
            <person name="Leister D."/>
            <person name="Pesaresi P."/>
        </authorList>
    </citation>
    <scope>DISRUPTION PHENOTYPE</scope>
</reference>
<reference key="5">
    <citation type="journal article" date="2023" name="Plant Cell">
        <title>An updated nomenclature for plant ribosomal protein genes.</title>
        <authorList>
            <person name="Scarpin M.R."/>
            <person name="Busche M."/>
            <person name="Martinez R.E."/>
            <person name="Harper L.C."/>
            <person name="Reiser L."/>
            <person name="Szakonyi D."/>
            <person name="Merchante C."/>
            <person name="Lan T."/>
            <person name="Xiong W."/>
            <person name="Mo B."/>
            <person name="Tang G."/>
            <person name="Chen X."/>
            <person name="Bailey-Serres J."/>
            <person name="Browning K.S."/>
            <person name="Brunkard J.O."/>
        </authorList>
    </citation>
    <scope>NOMENCLATURE</scope>
</reference>
<keyword id="KW-0150">Chloroplast</keyword>
<keyword id="KW-0934">Plastid</keyword>
<keyword id="KW-1185">Reference proteome</keyword>
<keyword id="KW-0687">Ribonucleoprotein</keyword>
<keyword id="KW-0689">Ribosomal protein</keyword>
<keyword id="KW-0809">Transit peptide</keyword>
<name>RK27_ARATH</name>
<sequence>MAMATSMSLNLIGAFKGLSLSSTSSFLRGDLSFSPKTSFTVTLPLENLQAPIPLTIESAHKKGAGSTKNGRDSPGQRLGVKIYGDQVAKPGAIIVRQRGTKFHAGKNVGIGKDHTIFSLIDGLVKFEKFGPDRKKISVYPREIVPENPNSYRARKRENFRLQREKKKARRENYSYTLPTPELVLASASVDDAEANPEC</sequence>
<dbReference type="EMBL" id="AB010072">
    <property type="protein sequence ID" value="BAB09697.1"/>
    <property type="molecule type" value="Genomic_DNA"/>
</dbReference>
<dbReference type="EMBL" id="CP002688">
    <property type="protein sequence ID" value="AED94618.1"/>
    <property type="molecule type" value="Genomic_DNA"/>
</dbReference>
<dbReference type="EMBL" id="AY046039">
    <property type="protein sequence ID" value="AAK76713.1"/>
    <property type="molecule type" value="mRNA"/>
</dbReference>
<dbReference type="EMBL" id="AY117267">
    <property type="protein sequence ID" value="AAM51342.1"/>
    <property type="molecule type" value="mRNA"/>
</dbReference>
<dbReference type="RefSeq" id="NP_198911.1">
    <property type="nucleotide sequence ID" value="NM_123460.5"/>
</dbReference>
<dbReference type="SMR" id="Q9FLN4"/>
<dbReference type="BioGRID" id="19348">
    <property type="interactions" value="14"/>
</dbReference>
<dbReference type="FunCoup" id="Q9FLN4">
    <property type="interactions" value="969"/>
</dbReference>
<dbReference type="STRING" id="3702.Q9FLN4"/>
<dbReference type="PaxDb" id="3702-AT5G40950.1"/>
<dbReference type="ProteomicsDB" id="234852"/>
<dbReference type="EnsemblPlants" id="AT5G40950.1">
    <property type="protein sequence ID" value="AT5G40950.1"/>
    <property type="gene ID" value="AT5G40950"/>
</dbReference>
<dbReference type="GeneID" id="834097"/>
<dbReference type="Gramene" id="AT5G40950.1">
    <property type="protein sequence ID" value="AT5G40950.1"/>
    <property type="gene ID" value="AT5G40950"/>
</dbReference>
<dbReference type="KEGG" id="ath:AT5G40950"/>
<dbReference type="Araport" id="AT5G40950"/>
<dbReference type="TAIR" id="AT5G40950">
    <property type="gene designation" value="RPL27"/>
</dbReference>
<dbReference type="eggNOG" id="KOG4600">
    <property type="taxonomic scope" value="Eukaryota"/>
</dbReference>
<dbReference type="HOGENOM" id="CLU_095424_0_0_1"/>
<dbReference type="InParanoid" id="Q9FLN4"/>
<dbReference type="OMA" id="REIQPEN"/>
<dbReference type="PhylomeDB" id="Q9FLN4"/>
<dbReference type="PRO" id="PR:Q9FLN4"/>
<dbReference type="Proteomes" id="UP000006548">
    <property type="component" value="Chromosome 5"/>
</dbReference>
<dbReference type="ExpressionAtlas" id="Q9FLN4">
    <property type="expression patterns" value="baseline and differential"/>
</dbReference>
<dbReference type="GO" id="GO:0009507">
    <property type="term" value="C:chloroplast"/>
    <property type="evidence" value="ECO:0007005"/>
    <property type="project" value="TAIR"/>
</dbReference>
<dbReference type="GO" id="GO:0009941">
    <property type="term" value="C:chloroplast envelope"/>
    <property type="evidence" value="ECO:0007005"/>
    <property type="project" value="TAIR"/>
</dbReference>
<dbReference type="GO" id="GO:0009570">
    <property type="term" value="C:chloroplast stroma"/>
    <property type="evidence" value="ECO:0007005"/>
    <property type="project" value="TAIR"/>
</dbReference>
<dbReference type="GO" id="GO:0009536">
    <property type="term" value="C:plastid"/>
    <property type="evidence" value="ECO:0007005"/>
    <property type="project" value="TAIR"/>
</dbReference>
<dbReference type="GO" id="GO:1990904">
    <property type="term" value="C:ribonucleoprotein complex"/>
    <property type="evidence" value="ECO:0007669"/>
    <property type="project" value="UniProtKB-KW"/>
</dbReference>
<dbReference type="GO" id="GO:0005840">
    <property type="term" value="C:ribosome"/>
    <property type="evidence" value="ECO:0007669"/>
    <property type="project" value="UniProtKB-KW"/>
</dbReference>
<dbReference type="GO" id="GO:0009579">
    <property type="term" value="C:thylakoid"/>
    <property type="evidence" value="ECO:0007005"/>
    <property type="project" value="TAIR"/>
</dbReference>
<dbReference type="GO" id="GO:0003729">
    <property type="term" value="F:mRNA binding"/>
    <property type="evidence" value="ECO:0000314"/>
    <property type="project" value="TAIR"/>
</dbReference>
<dbReference type="GO" id="GO:0003735">
    <property type="term" value="F:structural constituent of ribosome"/>
    <property type="evidence" value="ECO:0007669"/>
    <property type="project" value="InterPro"/>
</dbReference>
<dbReference type="GO" id="GO:0006412">
    <property type="term" value="P:translation"/>
    <property type="evidence" value="ECO:0007669"/>
    <property type="project" value="InterPro"/>
</dbReference>
<dbReference type="FunFam" id="2.40.50.100:FF:000051">
    <property type="entry name" value="50S ribosomal protein L27"/>
    <property type="match status" value="1"/>
</dbReference>
<dbReference type="Gene3D" id="2.40.50.100">
    <property type="match status" value="1"/>
</dbReference>
<dbReference type="HAMAP" id="MF_00539">
    <property type="entry name" value="Ribosomal_bL27"/>
    <property type="match status" value="1"/>
</dbReference>
<dbReference type="InterPro" id="IPR001684">
    <property type="entry name" value="Ribosomal_bL27"/>
</dbReference>
<dbReference type="InterPro" id="IPR018261">
    <property type="entry name" value="Ribosomal_bL27_CS"/>
</dbReference>
<dbReference type="NCBIfam" id="TIGR00062">
    <property type="entry name" value="L27"/>
    <property type="match status" value="1"/>
</dbReference>
<dbReference type="PANTHER" id="PTHR15893:SF0">
    <property type="entry name" value="LARGE RIBOSOMAL SUBUNIT PROTEIN BL27M"/>
    <property type="match status" value="1"/>
</dbReference>
<dbReference type="PANTHER" id="PTHR15893">
    <property type="entry name" value="RIBOSOMAL PROTEIN L27"/>
    <property type="match status" value="1"/>
</dbReference>
<dbReference type="Pfam" id="PF01016">
    <property type="entry name" value="Ribosomal_L27"/>
    <property type="match status" value="1"/>
</dbReference>
<dbReference type="PRINTS" id="PR00063">
    <property type="entry name" value="RIBOSOMALL27"/>
</dbReference>
<dbReference type="SUPFAM" id="SSF110324">
    <property type="entry name" value="Ribosomal L27 protein-like"/>
    <property type="match status" value="1"/>
</dbReference>
<dbReference type="PROSITE" id="PS00831">
    <property type="entry name" value="RIBOSOMAL_L27"/>
    <property type="match status" value="1"/>
</dbReference>
<comment type="subunit">
    <text>Part of the 50S ribosomal subunit.</text>
</comment>
<comment type="subcellular location">
    <subcellularLocation>
        <location>Plastid</location>
        <location>Chloroplast</location>
    </subcellularLocation>
</comment>
<comment type="disruption phenotype">
    <text evidence="1">Embryonic lethality. Embryo development arrested at the globular stage.</text>
</comment>
<comment type="similarity">
    <text evidence="3">Belongs to the bacterial ribosomal protein bL27 family.</text>
</comment>
<feature type="transit peptide" description="Chloroplast" evidence="3">
    <location>
        <begin position="1"/>
        <end position="58"/>
    </location>
</feature>
<feature type="chain" id="PRO_0000030493" description="Large ribosomal subunit protein bL27c">
    <location>
        <begin position="59"/>
        <end position="198"/>
    </location>
</feature>